<comment type="function">
    <text evidence="1">Catalyzes the interconversion of 2-phosphoglycerate and 3-phosphoglycerate.</text>
</comment>
<comment type="catalytic activity">
    <reaction>
        <text>(2R)-2-phosphoglycerate = (2R)-3-phosphoglycerate</text>
        <dbReference type="Rhea" id="RHEA:15901"/>
        <dbReference type="ChEBI" id="CHEBI:58272"/>
        <dbReference type="ChEBI" id="CHEBI:58289"/>
        <dbReference type="EC" id="5.4.2.12"/>
    </reaction>
</comment>
<comment type="pathway">
    <text>Carbohydrate degradation; glycolysis; pyruvate from D-glyceraldehyde 3-phosphate: step 3/5.</text>
</comment>
<comment type="similarity">
    <text evidence="2">Belongs to the BPG-independent phosphoglycerate mutase family. A-PGAM subfamily.</text>
</comment>
<comment type="sequence caution" evidence="2">
    <conflict type="erroneous initiation">
        <sequence resource="EMBL-CDS" id="AAM31114"/>
    </conflict>
</comment>
<reference key="1">
    <citation type="journal article" date="2002" name="J. Mol. Microbiol. Biotechnol.">
        <title>The genome of Methanosarcina mazei: evidence for lateral gene transfer between Bacteria and Archaea.</title>
        <authorList>
            <person name="Deppenmeier U."/>
            <person name="Johann A."/>
            <person name="Hartsch T."/>
            <person name="Merkl R."/>
            <person name="Schmitz R.A."/>
            <person name="Martinez-Arias R."/>
            <person name="Henne A."/>
            <person name="Wiezer A."/>
            <person name="Baeumer S."/>
            <person name="Jacobi C."/>
            <person name="Brueggemann H."/>
            <person name="Lienard T."/>
            <person name="Christmann A."/>
            <person name="Boemecke M."/>
            <person name="Steckel S."/>
            <person name="Bhattacharyya A."/>
            <person name="Lykidis A."/>
            <person name="Overbeek R."/>
            <person name="Klenk H.-P."/>
            <person name="Gunsalus R.P."/>
            <person name="Fritz H.-J."/>
            <person name="Gottschalk G."/>
        </authorList>
    </citation>
    <scope>NUCLEOTIDE SEQUENCE [LARGE SCALE GENOMIC DNA]</scope>
    <source>
        <strain>ATCC BAA-159 / DSM 3647 / Goe1 / Go1 / JCM 11833 / OCM 88</strain>
    </source>
</reference>
<name>APGM_METMA</name>
<gene>
    <name type="primary">apgM</name>
    <name type="ordered locus">MM_1418</name>
</gene>
<protein>
    <recommendedName>
        <fullName>2,3-bisphosphoglycerate-independent phosphoglycerate mutase</fullName>
        <shortName>BPG-independent PGAM</shortName>
        <shortName>Phosphoglyceromutase</shortName>
        <shortName>aPGAM</shortName>
        <ecNumber>5.4.2.12</ecNumber>
    </recommendedName>
</protein>
<accession>Q8PX04</accession>
<keyword id="KW-0324">Glycolysis</keyword>
<keyword id="KW-0413">Isomerase</keyword>
<proteinExistence type="inferred from homology"/>
<evidence type="ECO:0000250" key="1"/>
<evidence type="ECO:0000305" key="2"/>
<organism>
    <name type="scientific">Methanosarcina mazei (strain ATCC BAA-159 / DSM 3647 / Goe1 / Go1 / JCM 11833 / OCM 88)</name>
    <name type="common">Methanosarcina frisia</name>
    <dbReference type="NCBI Taxonomy" id="192952"/>
    <lineage>
        <taxon>Archaea</taxon>
        <taxon>Methanobacteriati</taxon>
        <taxon>Methanobacteriota</taxon>
        <taxon>Stenosarchaea group</taxon>
        <taxon>Methanomicrobia</taxon>
        <taxon>Methanosarcinales</taxon>
        <taxon>Methanosarcinaceae</taxon>
        <taxon>Methanosarcina</taxon>
    </lineage>
</organism>
<dbReference type="EC" id="5.4.2.12"/>
<dbReference type="EMBL" id="AE008384">
    <property type="protein sequence ID" value="AAM31114.1"/>
    <property type="status" value="ALT_INIT"/>
    <property type="molecule type" value="Genomic_DNA"/>
</dbReference>
<dbReference type="RefSeq" id="WP_011033364.1">
    <property type="nucleotide sequence ID" value="NC_003901.1"/>
</dbReference>
<dbReference type="SMR" id="Q8PX04"/>
<dbReference type="KEGG" id="mma:MM_1418"/>
<dbReference type="PATRIC" id="fig|192952.21.peg.1641"/>
<dbReference type="eggNOG" id="arCOG01696">
    <property type="taxonomic scope" value="Archaea"/>
</dbReference>
<dbReference type="HOGENOM" id="CLU_034906_2_0_2"/>
<dbReference type="UniPathway" id="UPA00109">
    <property type="reaction ID" value="UER00186"/>
</dbReference>
<dbReference type="Proteomes" id="UP000000595">
    <property type="component" value="Chromosome"/>
</dbReference>
<dbReference type="GO" id="GO:0046872">
    <property type="term" value="F:metal ion binding"/>
    <property type="evidence" value="ECO:0007669"/>
    <property type="project" value="InterPro"/>
</dbReference>
<dbReference type="GO" id="GO:0004619">
    <property type="term" value="F:phosphoglycerate mutase activity"/>
    <property type="evidence" value="ECO:0007669"/>
    <property type="project" value="UniProtKB-EC"/>
</dbReference>
<dbReference type="GO" id="GO:0006096">
    <property type="term" value="P:glycolytic process"/>
    <property type="evidence" value="ECO:0007669"/>
    <property type="project" value="UniProtKB-UniRule"/>
</dbReference>
<dbReference type="CDD" id="cd16011">
    <property type="entry name" value="iPGM_like"/>
    <property type="match status" value="1"/>
</dbReference>
<dbReference type="Gene3D" id="3.40.720.10">
    <property type="entry name" value="Alkaline Phosphatase, subunit A"/>
    <property type="match status" value="1"/>
</dbReference>
<dbReference type="Gene3D" id="3.30.70.2130">
    <property type="entry name" value="Metalloenzyme domain"/>
    <property type="match status" value="1"/>
</dbReference>
<dbReference type="HAMAP" id="MF_01402_A">
    <property type="entry name" value="ApgM_A"/>
    <property type="match status" value="1"/>
</dbReference>
<dbReference type="InterPro" id="IPR017850">
    <property type="entry name" value="Alkaline_phosphatase_core_sf"/>
</dbReference>
<dbReference type="InterPro" id="IPR023665">
    <property type="entry name" value="ApgAM_prokaryotes"/>
</dbReference>
<dbReference type="InterPro" id="IPR006124">
    <property type="entry name" value="Metalloenzyme"/>
</dbReference>
<dbReference type="InterPro" id="IPR004456">
    <property type="entry name" value="Pglycerate_mutase_ApgM"/>
</dbReference>
<dbReference type="InterPro" id="IPR042253">
    <property type="entry name" value="Pglycerate_mutase_ApgM_sf"/>
</dbReference>
<dbReference type="NCBIfam" id="TIGR00306">
    <property type="entry name" value="apgM"/>
    <property type="match status" value="1"/>
</dbReference>
<dbReference type="NCBIfam" id="TIGR02535">
    <property type="entry name" value="hyp_Hser_kinase"/>
    <property type="match status" value="1"/>
</dbReference>
<dbReference type="NCBIfam" id="NF003242">
    <property type="entry name" value="PRK04200.1"/>
    <property type="match status" value="1"/>
</dbReference>
<dbReference type="PANTHER" id="PTHR31209:SF4">
    <property type="entry name" value="2,3-BISPHOSPHOGLYCERATE-INDEPENDENT PHOSPHOGLYCERATE MUTASE"/>
    <property type="match status" value="1"/>
</dbReference>
<dbReference type="PANTHER" id="PTHR31209">
    <property type="entry name" value="COFACTOR-INDEPENDENT PHOSPHOGLYCERATE MUTASE"/>
    <property type="match status" value="1"/>
</dbReference>
<dbReference type="Pfam" id="PF01676">
    <property type="entry name" value="Metalloenzyme"/>
    <property type="match status" value="1"/>
</dbReference>
<dbReference type="Pfam" id="PF10143">
    <property type="entry name" value="PhosphMutase"/>
    <property type="match status" value="1"/>
</dbReference>
<dbReference type="PIRSF" id="PIRSF006392">
    <property type="entry name" value="IPGAM_arch"/>
    <property type="match status" value="1"/>
</dbReference>
<dbReference type="SUPFAM" id="SSF53649">
    <property type="entry name" value="Alkaline phosphatase-like"/>
    <property type="match status" value="1"/>
</dbReference>
<sequence length="397" mass="43175">MKYAILIGDGMADYPIEKLGNRTILQAARTPAMDSIAARGRAGLAKTVPDSFPPGSDVANMSILGYDPATYYSGRAPLEAASMGVALAADDVAFRCNLITTEHGMIKDYSAGHISSDEAEILIDTLDYELSTENIRFYPGISYRHLIVAGNNLGAETECTPPHDITGEKIDKYLPRGKDGEFFSELIEASKVVLELHPVNLKRVEEGKNPANSIWVWGQGYAPKFTAFMKLYGKKGAVISAVDLLKGIGIYAGLDVIEVHGATGYLDTNYEGKVRAAIEALKTRDLVFVHVEAPDEAGHEGSIEKKLKAVEDFDSRIVAPILEYAENSDEPFTILVLPDHPTPISVKTHTRDPIPFAIYRTDKPETDNVEAFDEESVKNGSMGLVKASDLIGILIKS</sequence>
<feature type="chain" id="PRO_0000138137" description="2,3-bisphosphoglycerate-independent phosphoglycerate mutase">
    <location>
        <begin position="1"/>
        <end position="397"/>
    </location>
</feature>